<comment type="function">
    <text evidence="2 3">Catalyzes the conversion of the ubiquitous 5,6-epoxycarotenoids, antheraxanthin and violaxanthin, into capsanthin and capsorubin, respectively.</text>
</comment>
<comment type="catalytic activity">
    <reaction evidence="3">
        <text>all-trans-violaxanthin = all-trans-capsorubin</text>
        <dbReference type="Rhea" id="RHEA:21752"/>
        <dbReference type="ChEBI" id="CHEBI:3378"/>
        <dbReference type="ChEBI" id="CHEBI:35288"/>
        <dbReference type="EC" id="5.3.99.8"/>
    </reaction>
    <physiologicalReaction direction="left-to-right" evidence="3">
        <dbReference type="Rhea" id="RHEA:21753"/>
    </physiologicalReaction>
</comment>
<comment type="catalytic activity">
    <reaction evidence="3">
        <text>all-trans-antheraxanthin = all-trans-capsanthin</text>
        <dbReference type="Rhea" id="RHEA:17373"/>
        <dbReference type="ChEBI" id="CHEBI:3375"/>
        <dbReference type="ChEBI" id="CHEBI:27867"/>
        <dbReference type="EC" id="5.3.99.8"/>
    </reaction>
    <physiologicalReaction direction="left-to-right" evidence="3">
        <dbReference type="Rhea" id="RHEA:17374"/>
    </physiologicalReaction>
</comment>
<comment type="catalytic activity">
    <reaction evidence="2">
        <text>all-trans-violaxanthin = (5R,6S)-5,6-epoxi-capsanthin</text>
        <dbReference type="Rhea" id="RHEA:49320"/>
        <dbReference type="ChEBI" id="CHEBI:35288"/>
        <dbReference type="ChEBI" id="CHEBI:91165"/>
    </reaction>
    <physiologicalReaction direction="left-to-right" evidence="2">
        <dbReference type="Rhea" id="RHEA:49321"/>
    </physiologicalReaction>
</comment>
<comment type="catalytic activity">
    <reaction evidence="2">
        <text>(5R,6S)-5,6-epoxi-capsanthin = all-trans-capsorubin</text>
        <dbReference type="Rhea" id="RHEA:49324"/>
        <dbReference type="ChEBI" id="CHEBI:3378"/>
        <dbReference type="ChEBI" id="CHEBI:91165"/>
    </reaction>
    <physiologicalReaction direction="left-to-right" evidence="2">
        <dbReference type="Rhea" id="RHEA:49325"/>
    </physiologicalReaction>
</comment>
<comment type="cofactor">
    <cofactor evidence="2">
        <name>FAD</name>
        <dbReference type="ChEBI" id="CHEBI:57692"/>
    </cofactor>
    <text evidence="2">Binds 1 FAD per subunit non-covalently.</text>
</comment>
<comment type="cofactor">
    <cofactor evidence="2">
        <name>NADPH</name>
        <dbReference type="ChEBI" id="CHEBI:57783"/>
    </cofactor>
</comment>
<comment type="biophysicochemical properties">
    <kinetics>
        <KM evidence="2">0.25 mM for NADPH</KM>
    </kinetics>
</comment>
<comment type="pathway">
    <text evidence="5">Carotenoid biosynthesis; capsanthin biosynthesis; capsanthin from antheraxanthin: step 1/1.</text>
</comment>
<comment type="pathway">
    <text evidence="5">Carotenoid biosynthesis; capsorubin biosynthesis; capsorubin from violaxanthin: step 1/1.</text>
</comment>
<comment type="subunit">
    <text evidence="2">Monomer.</text>
</comment>
<comment type="subcellular location">
    <subcellularLocation>
        <location evidence="7">Plastid</location>
        <location evidence="7">Chromoplast</location>
    </subcellularLocation>
</comment>
<comment type="similarity">
    <text evidence="5">Belongs to the lycopene cyclase family.</text>
</comment>
<accession>Q42435</accession>
<accession>A0A089N971</accession>
<accession>A0A089NBH9</accession>
<accession>A0A1U8H3A2</accession>
<accession>Q39470</accession>
<protein>
    <recommendedName>
        <fullName evidence="4">Capsanthin/capsorubin synthase, chromoplastic</fullName>
        <ecNumber evidence="3">5.3.99.8</ecNumber>
    </recommendedName>
</protein>
<feature type="transit peptide" description="Chromoplast" evidence="1">
    <location>
        <begin position="1"/>
        <end position="52"/>
    </location>
</feature>
<feature type="chain" id="PRO_0000018436" description="Capsanthin/capsorubin synthase, chromoplastic">
    <location>
        <begin position="53"/>
        <end position="498"/>
    </location>
</feature>
<feature type="short sequence motif" description="FLEET motif" evidence="6">
    <location>
        <begin position="293"/>
        <end position="297"/>
    </location>
</feature>
<feature type="binding site" evidence="1">
    <location>
        <begin position="84"/>
        <end position="112"/>
    </location>
    <ligand>
        <name>NAD(+)</name>
        <dbReference type="ChEBI" id="CHEBI:57540"/>
    </ligand>
</feature>
<feature type="mutagenesis site" description="Reduces catalytic activity 1.5-fold." evidence="2">
    <original>D</original>
    <variation>A</variation>
    <location>
        <position position="127"/>
    </location>
</feature>
<feature type="mutagenesis site" description="Reduces catalytic activity 23-fold." evidence="2">
    <original>E</original>
    <variation>A</variation>
    <location>
        <position position="128"/>
    </location>
</feature>
<feature type="mutagenesis site" description="Reduces catalytic activity 3-fold." evidence="2">
    <original>D</original>
    <variation>A</variation>
    <location>
        <position position="259"/>
    </location>
</feature>
<feature type="mutagenesis site" description="Abolishes catalytic activity." evidence="2">
    <original>E</original>
    <variation>A</variation>
    <variation>K</variation>
    <variation>R</variation>
    <location>
        <position position="295"/>
    </location>
</feature>
<feature type="mutagenesis site" description="Almost abolishes catalytic activity." evidence="2">
    <original>E</original>
    <variation>A</variation>
    <variation>K</variation>
    <variation>R</variation>
    <location>
        <position position="296"/>
    </location>
</feature>
<feature type="mutagenesis site" description="Reduces catalytic activity 10-fold." evidence="2">
    <original>E</original>
    <variation>A</variation>
    <location>
        <position position="332"/>
    </location>
</feature>
<feature type="mutagenesis site" description="Abolishes catalytic activity." evidence="2">
    <original>H</original>
    <variation>A</variation>
    <location>
        <position position="360"/>
    </location>
</feature>
<feature type="mutagenesis site" description="Reduces catalytic activity 3-fold." evidence="2">
    <original>H</original>
    <variation>K</variation>
    <location>
        <position position="360"/>
    </location>
</feature>
<feature type="mutagenesis site" description="Reduces catalytic activity 4-fold." evidence="2">
    <original>H</original>
    <variation>R</variation>
    <location>
        <position position="360"/>
    </location>
</feature>
<feature type="sequence conflict" description="In Ref. 1; CAA54495, 2; CAA53759, 3; CAA54961, 4; AIQ82715/AIQ82716/AIQ82717/AIQ82718 and 7." evidence="5" ref="1 2 3 4 7">
    <original>R</original>
    <variation>G</variation>
    <location>
        <position position="79"/>
    </location>
</feature>
<feature type="sequence conflict" description="In Ref. 3; CAA54961." evidence="5" ref="3">
    <original>A</original>
    <variation>R</variation>
    <location>
        <position position="316"/>
    </location>
</feature>
<feature type="sequence conflict" description="In Ref. 3; CAA54961." evidence="5" ref="3">
    <original>AEA</original>
    <variation>LRP</variation>
    <location>
        <begin position="378"/>
        <end position="380"/>
    </location>
</feature>
<feature type="sequence conflict" description="In Ref. 3; CAA54961." evidence="5" ref="3">
    <original>PSD</original>
    <variation>LRH</variation>
    <location>
        <begin position="406"/>
        <end position="408"/>
    </location>
</feature>
<feature type="sequence conflict" description="In Ref. 3." evidence="5" ref="3">
    <original>ELAVLSLYLFGHASNLARLDIVTKCTVPLVKLLGNLAIES</original>
    <variation>RTCCTQFVPFWTC</variation>
    <location>
        <begin position="458"/>
        <end position="497"/>
    </location>
</feature>
<organism>
    <name type="scientific">Capsicum annuum</name>
    <name type="common">Capsicum pepper</name>
    <dbReference type="NCBI Taxonomy" id="4072"/>
    <lineage>
        <taxon>Eukaryota</taxon>
        <taxon>Viridiplantae</taxon>
        <taxon>Streptophyta</taxon>
        <taxon>Embryophyta</taxon>
        <taxon>Tracheophyta</taxon>
        <taxon>Spermatophyta</taxon>
        <taxon>Magnoliopsida</taxon>
        <taxon>eudicotyledons</taxon>
        <taxon>Gunneridae</taxon>
        <taxon>Pentapetalae</taxon>
        <taxon>asterids</taxon>
        <taxon>lamiids</taxon>
        <taxon>Solanales</taxon>
        <taxon>Solanaceae</taxon>
        <taxon>Solanoideae</taxon>
        <taxon>Capsiceae</taxon>
        <taxon>Capsicum</taxon>
    </lineage>
</organism>
<keyword id="KW-0125">Carotenoid biosynthesis</keyword>
<keyword id="KW-0957">Chromoplast</keyword>
<keyword id="KW-0285">Flavoprotein</keyword>
<keyword id="KW-0413">Isomerase</keyword>
<keyword id="KW-0520">NAD</keyword>
<keyword id="KW-0560">Oxidoreductase</keyword>
<keyword id="KW-0934">Plastid</keyword>
<keyword id="KW-1185">Reference proteome</keyword>
<keyword id="KW-0809">Transit peptide</keyword>
<evidence type="ECO:0000255" key="1"/>
<evidence type="ECO:0000269" key="2">
    <source>
    </source>
</evidence>
<evidence type="ECO:0000269" key="3">
    <source>
    </source>
</evidence>
<evidence type="ECO:0000303" key="4">
    <source>
    </source>
</evidence>
<evidence type="ECO:0000305" key="5"/>
<evidence type="ECO:0000305" key="6">
    <source>
    </source>
</evidence>
<evidence type="ECO:0000305" key="7">
    <source>
    </source>
</evidence>
<evidence type="ECO:0000312" key="8">
    <source>
        <dbReference type="EMBL" id="PHT80001.1"/>
    </source>
</evidence>
<proteinExistence type="evidence at protein level"/>
<dbReference type="EC" id="5.3.99.8" evidence="3"/>
<dbReference type="EMBL" id="X77289">
    <property type="protein sequence ID" value="CAA54495.1"/>
    <property type="molecule type" value="Genomic_DNA"/>
</dbReference>
<dbReference type="EMBL" id="X76165">
    <property type="protein sequence ID" value="CAA53759.1"/>
    <property type="molecule type" value="mRNA"/>
</dbReference>
<dbReference type="EMBL" id="X78030">
    <property type="protein sequence ID" value="CAA54961.1"/>
    <property type="molecule type" value="Genomic_DNA"/>
</dbReference>
<dbReference type="EMBL" id="KM037687">
    <property type="protein sequence ID" value="AIQ82715.1"/>
    <property type="molecule type" value="Genomic_DNA"/>
</dbReference>
<dbReference type="EMBL" id="KM037690">
    <property type="protein sequence ID" value="AIQ82718.1"/>
    <property type="molecule type" value="Genomic_DNA"/>
</dbReference>
<dbReference type="EMBL" id="KM037689">
    <property type="protein sequence ID" value="AIQ82717.1"/>
    <property type="molecule type" value="Genomic_DNA"/>
</dbReference>
<dbReference type="EMBL" id="KM037688">
    <property type="protein sequence ID" value="AIQ82716.1"/>
    <property type="molecule type" value="Genomic_DNA"/>
</dbReference>
<dbReference type="EMBL" id="KM037692">
    <property type="protein sequence ID" value="AIQ82719.1"/>
    <property type="molecule type" value="Genomic_DNA"/>
</dbReference>
<dbReference type="EMBL" id="KM037693">
    <property type="protein sequence ID" value="AIQ82720.1"/>
    <property type="molecule type" value="Genomic_DNA"/>
</dbReference>
<dbReference type="EMBL" id="KM037694">
    <property type="protein sequence ID" value="AIQ82721.1"/>
    <property type="molecule type" value="Genomic_DNA"/>
</dbReference>
<dbReference type="EMBL" id="KM037695">
    <property type="protein sequence ID" value="AIQ82722.1"/>
    <property type="molecule type" value="Genomic_DNA"/>
</dbReference>
<dbReference type="EMBL" id="KM037696">
    <property type="protein sequence ID" value="AIQ82723.1"/>
    <property type="molecule type" value="Genomic_DNA"/>
</dbReference>
<dbReference type="EMBL" id="KM037697">
    <property type="protein sequence ID" value="AIQ82724.1"/>
    <property type="molecule type" value="Genomic_DNA"/>
</dbReference>
<dbReference type="EMBL" id="KM037698">
    <property type="protein sequence ID" value="AIQ82725.1"/>
    <property type="molecule type" value="Genomic_DNA"/>
</dbReference>
<dbReference type="EMBL" id="KM037699">
    <property type="protein sequence ID" value="AIQ82726.1"/>
    <property type="molecule type" value="Genomic_DNA"/>
</dbReference>
<dbReference type="EMBL" id="KM037700">
    <property type="protein sequence ID" value="AIQ82727.1"/>
    <property type="molecule type" value="Genomic_DNA"/>
</dbReference>
<dbReference type="EMBL" id="KM037701">
    <property type="protein sequence ID" value="AIQ82728.1"/>
    <property type="molecule type" value="Genomic_DNA"/>
</dbReference>
<dbReference type="EMBL" id="KM037702">
    <property type="protein sequence ID" value="AIQ82729.1"/>
    <property type="molecule type" value="Genomic_DNA"/>
</dbReference>
<dbReference type="EMBL" id="KM037703">
    <property type="protein sequence ID" value="AIQ82730.1"/>
    <property type="molecule type" value="Genomic_DNA"/>
</dbReference>
<dbReference type="EMBL" id="KM037704">
    <property type="protein sequence ID" value="AIQ82731.1"/>
    <property type="molecule type" value="Genomic_DNA"/>
</dbReference>
<dbReference type="EMBL" id="KM037705">
    <property type="protein sequence ID" value="AIQ82732.1"/>
    <property type="molecule type" value="Genomic_DNA"/>
</dbReference>
<dbReference type="EMBL" id="KM262815">
    <property type="protein sequence ID" value="AIX02795.1"/>
    <property type="molecule type" value="mRNA"/>
</dbReference>
<dbReference type="EMBL" id="KM262816">
    <property type="protein sequence ID" value="AIX02796.1"/>
    <property type="molecule type" value="mRNA"/>
</dbReference>
<dbReference type="EMBL" id="AYRZ02000006">
    <property type="protein sequence ID" value="PHT80001.1"/>
    <property type="molecule type" value="Genomic_DNA"/>
</dbReference>
<dbReference type="PIR" id="S51511">
    <property type="entry name" value="S51511"/>
</dbReference>
<dbReference type="PIR" id="S71511">
    <property type="entry name" value="S71511"/>
</dbReference>
<dbReference type="RefSeq" id="NP_001311998.1">
    <property type="nucleotide sequence ID" value="NM_001325069.1"/>
</dbReference>
<dbReference type="SMR" id="Q42435"/>
<dbReference type="STRING" id="4072.A0A089N971"/>
<dbReference type="SwissLipids" id="SLP:000001510"/>
<dbReference type="EnsemblPlants" id="PHT80001">
    <property type="protein sequence ID" value="PHT80001"/>
    <property type="gene ID" value="T459_18053"/>
</dbReference>
<dbReference type="GeneID" id="107875664"/>
<dbReference type="Gramene" id="PHT80001">
    <property type="protein sequence ID" value="PHT80001"/>
    <property type="gene ID" value="T459_18053"/>
</dbReference>
<dbReference type="KEGG" id="ag:CAA53759"/>
<dbReference type="KEGG" id="cann:107875664"/>
<dbReference type="OMA" id="RMIRGSQ"/>
<dbReference type="OrthoDB" id="1716816at2759"/>
<dbReference type="BioCyc" id="MetaCyc:MONOMER-12145"/>
<dbReference type="BRENDA" id="5.3.99.8">
    <property type="organism ID" value="1169"/>
</dbReference>
<dbReference type="BRENDA" id="5.5.1.19">
    <property type="organism ID" value="1169"/>
</dbReference>
<dbReference type="UniPathway" id="UPA00806">
    <property type="reaction ID" value="UER00774"/>
</dbReference>
<dbReference type="UniPathway" id="UPA00807">
    <property type="reaction ID" value="UER00775"/>
</dbReference>
<dbReference type="Proteomes" id="UP000222542">
    <property type="component" value="Chromosome 6"/>
</dbReference>
<dbReference type="GO" id="GO:0009509">
    <property type="term" value="C:chromoplast"/>
    <property type="evidence" value="ECO:0007669"/>
    <property type="project" value="UniProtKB-SubCell"/>
</dbReference>
<dbReference type="GO" id="GO:0005739">
    <property type="term" value="C:mitochondrion"/>
    <property type="evidence" value="ECO:0000318"/>
    <property type="project" value="GO_Central"/>
</dbReference>
<dbReference type="GO" id="GO:0052727">
    <property type="term" value="F:capsanthin synthase activity"/>
    <property type="evidence" value="ECO:0007669"/>
    <property type="project" value="RHEA"/>
</dbReference>
<dbReference type="GO" id="GO:0052728">
    <property type="term" value="F:capsorubin synthase activity"/>
    <property type="evidence" value="ECO:0007669"/>
    <property type="project" value="RHEA"/>
</dbReference>
<dbReference type="GO" id="GO:0045436">
    <property type="term" value="F:lycopene beta cyclase activity"/>
    <property type="evidence" value="ECO:0000318"/>
    <property type="project" value="GO_Central"/>
</dbReference>
<dbReference type="GO" id="GO:0016491">
    <property type="term" value="F:oxidoreductase activity"/>
    <property type="evidence" value="ECO:0000318"/>
    <property type="project" value="GO_Central"/>
</dbReference>
<dbReference type="GO" id="GO:0016705">
    <property type="term" value="F:oxidoreductase activity, acting on paired donors, with incorporation or reduction of molecular oxygen"/>
    <property type="evidence" value="ECO:0007669"/>
    <property type="project" value="InterPro"/>
</dbReference>
<dbReference type="GO" id="GO:0016120">
    <property type="term" value="P:carotene biosynthetic process"/>
    <property type="evidence" value="ECO:0000318"/>
    <property type="project" value="GO_Central"/>
</dbReference>
<dbReference type="GO" id="GO:0006744">
    <property type="term" value="P:ubiquinone biosynthetic process"/>
    <property type="evidence" value="ECO:0000318"/>
    <property type="project" value="GO_Central"/>
</dbReference>
<dbReference type="GO" id="GO:0016123">
    <property type="term" value="P:xanthophyll biosynthetic process"/>
    <property type="evidence" value="ECO:0000318"/>
    <property type="project" value="GO_Central"/>
</dbReference>
<dbReference type="FunFam" id="3.50.50.60:FF:000101">
    <property type="entry name" value="lycopene epsilon cyclase, chloroplastic"/>
    <property type="match status" value="1"/>
</dbReference>
<dbReference type="Gene3D" id="3.50.50.60">
    <property type="entry name" value="FAD/NAD(P)-binding domain"/>
    <property type="match status" value="1"/>
</dbReference>
<dbReference type="InterPro" id="IPR036188">
    <property type="entry name" value="FAD/NAD-bd_sf"/>
</dbReference>
<dbReference type="InterPro" id="IPR010108">
    <property type="entry name" value="Lycopene_cyclase_b/e"/>
</dbReference>
<dbReference type="NCBIfam" id="TIGR01790">
    <property type="entry name" value="carotene-cycl"/>
    <property type="match status" value="1"/>
</dbReference>
<dbReference type="PANTHER" id="PTHR39757">
    <property type="match status" value="1"/>
</dbReference>
<dbReference type="PANTHER" id="PTHR39757:SF9">
    <property type="entry name" value="CAPSANTHIN_CAPSORUBIN SYNTHASE, CHROMOPLAST PROTEIN"/>
    <property type="match status" value="1"/>
</dbReference>
<dbReference type="Pfam" id="PF05834">
    <property type="entry name" value="Lycopene_cycl"/>
    <property type="match status" value="1"/>
</dbReference>
<dbReference type="SUPFAM" id="SSF51905">
    <property type="entry name" value="FAD/NAD(P)-binding domain"/>
    <property type="match status" value="1"/>
</dbReference>
<gene>
    <name evidence="4" type="primary">CCS</name>
    <name evidence="8" type="ORF">T459_18053</name>
</gene>
<sequence length="498" mass="56758">METLLKPFPSPLLSIPTPNMYSFKHNSTFPNPTKQKDSRKFHYRNKSSTHFCSFLDLAPTSKPESLDVNISWVDTDLDRAEFDVIIIGTGPAGLRLAEQVSKYGIKVCCVDPSPLSMWPNNYGVWVDEFEKLGLEDCLDHKWPVSCVHISDHKTKYLDRPYGRVSRKKLKLKLLNSCVENRVKFYKAKVLKVKHEEFESSIVCDDGRKISGSLIVDASGYASDFIEYDKPRNHGYQVAHGILAEVDNHPFDLDKMMLMDWRDSHLGNEPYLRVKNTKEPTFLYAMPFDRNLVFLEETSLVSRPMLSYMEVKRRMVARLRHLGIKVRSVLEEEKCVITMGGPLPRIPQNVMAIGGTSGIVHPSSGYMVARSMALAPVLAEAIVESLGSTRMIRGSQLYHRVWNGLWPSDRRRVRECYCFGMETLLKLDLEGTRRLFDAFFDVDPKYWHGFLSSRLSVKELAVLSLYLFGHASNLARLDIVTKCTVPLVKLLGNLAIESL</sequence>
<reference key="1">
    <citation type="journal article" date="1994" name="Biochem. Biophys. Res. Commun.">
        <title>Structure and expression of two plant genes encoding chromoplast-specific proteins: occurrence of partially spliced transcripts.</title>
        <authorList>
            <person name="Deruere J."/>
            <person name="Bouvier F."/>
            <person name="Steppuhn J."/>
            <person name="Klein A."/>
            <person name="Camara B."/>
            <person name="Kuntz M."/>
        </authorList>
    </citation>
    <scope>NUCLEOTIDE SEQUENCE [GENOMIC DNA]</scope>
    <source>
        <strain>cv. Yolo Wonder</strain>
    </source>
</reference>
<reference key="2">
    <citation type="journal article" date="1994" name="Plant J.">
        <title>Xanthophyll biosynthesis in chromoplasts: isolation and molecular cloning of an enzyme catalyzing the conversion of 5,6-epoxycarotenoid into ketocarotenoid.</title>
        <authorList>
            <person name="Bouvier F."/>
            <person name="Huqueney P."/>
            <person name="d'Harlinque A."/>
            <person name="Kuntz M."/>
            <person name="Camara B."/>
        </authorList>
    </citation>
    <scope>NUCLEOTIDE SEQUENCE [MRNA]</scope>
    <scope>FUNCTION</scope>
    <scope>CATALYTIC ACTIVITY</scope>
    <scope>SUBCELLULAR LOCATION</scope>
    <source>
        <strain>cv. Lamuyo</strain>
    </source>
</reference>
<reference key="3">
    <citation type="journal article" date="1994" name="Curr. Genet.">
        <title>A chromoplast-specific protein in Capsicum annuum: characterization and expression of the corresponding gene.</title>
        <authorList>
            <person name="Houln G."/>
            <person name="Schantz M.L."/>
            <person name="Meyer B."/>
            <person name="Pozueta-Romero J."/>
            <person name="Schantz R."/>
        </authorList>
    </citation>
    <scope>NUCLEOTIDE SEQUENCE [GENOMIC DNA]</scope>
    <source>
        <strain>cv. Yolo Wonder</strain>
    </source>
</reference>
<reference key="4">
    <citation type="submission" date="2014-06" db="EMBL/GenBank/DDBJ databases">
        <title>Capsaicinoid and carotenoid composition and genetic diversity in new Mexican Capsicum annuum L. landraces.</title>
        <authorList>
            <person name="Rodriguez-Uribe L."/>
            <person name="O'Connell M.A."/>
        </authorList>
    </citation>
    <scope>NUCLEOTIDE SEQUENCE [GENOMIC DNA]</scope>
</reference>
<reference key="5">
    <citation type="journal article" date="2015" name="Plant Sci.">
        <title>Correlations of carotenoid content and transcript abundances for fibrillin and carotenogenic enzymes in Capsicum annum fruit pericarp.</title>
        <authorList>
            <person name="Kilcrease J."/>
            <person name="Rodriguez-Uribe L."/>
            <person name="Richins R.D."/>
            <person name="Arcos J.M."/>
            <person name="Victorino J."/>
            <person name="O'Connell M.A."/>
        </authorList>
    </citation>
    <scope>NUCLEOTIDE SEQUENCE [MRNA]</scope>
    <source>
        <tissue>Pericarp</tissue>
    </source>
</reference>
<reference key="6">
    <citation type="journal article" date="2014" name="Nat. Genet.">
        <title>Genome sequence of the hot pepper provides insights into the evolution of pungency in Capsicum species.</title>
        <authorList>
            <person name="Kim S."/>
            <person name="Park M."/>
            <person name="Yeom S.I."/>
            <person name="Kim Y.M."/>
            <person name="Lee J.M."/>
            <person name="Lee H.A."/>
            <person name="Seo E."/>
            <person name="Choi J."/>
            <person name="Cheong K."/>
            <person name="Kim K.T."/>
            <person name="Jung K."/>
            <person name="Lee G.W."/>
            <person name="Oh S.K."/>
            <person name="Bae C."/>
            <person name="Kim S.B."/>
            <person name="Lee H.Y."/>
            <person name="Kim S.Y."/>
            <person name="Kim M.S."/>
            <person name="Kang B.C."/>
            <person name="Jo Y.D."/>
            <person name="Yang H.B."/>
            <person name="Jeong H.J."/>
            <person name="Kang W.H."/>
            <person name="Kwon J.K."/>
            <person name="Shin C."/>
            <person name="Lim J.Y."/>
            <person name="Park J.H."/>
            <person name="Huh J.H."/>
            <person name="Kim J.S."/>
            <person name="Kim B.D."/>
            <person name="Cohen O."/>
            <person name="Paran I."/>
            <person name="Suh M.C."/>
            <person name="Lee S.B."/>
            <person name="Kim Y.K."/>
            <person name="Shin Y."/>
            <person name="Noh S.J."/>
            <person name="Park J."/>
            <person name="Seo Y.S."/>
            <person name="Kwon S.Y."/>
            <person name="Kim H.A."/>
            <person name="Park J.M."/>
            <person name="Kim H.J."/>
            <person name="Choi S.B."/>
            <person name="Bosland P.W."/>
            <person name="Reeves G."/>
            <person name="Jo S.H."/>
            <person name="Lee B.W."/>
            <person name="Cho H.T."/>
            <person name="Choi H.S."/>
            <person name="Lee M.S."/>
            <person name="Yu Y."/>
            <person name="Do Choi Y."/>
            <person name="Park B.S."/>
            <person name="van Deynze A."/>
            <person name="Ashrafi H."/>
            <person name="Hill T."/>
            <person name="Kim W.T."/>
            <person name="Pai H.S."/>
            <person name="Ahn H.K."/>
            <person name="Yeam I."/>
            <person name="Giovannoni J.J."/>
            <person name="Rose J.K."/>
            <person name="Soerensen I."/>
            <person name="Lee S.J."/>
            <person name="Kim R.W."/>
            <person name="Choi I.Y."/>
            <person name="Choi B.S."/>
            <person name="Lim J.S."/>
            <person name="Lee Y.H."/>
            <person name="Choi D."/>
        </authorList>
    </citation>
    <scope>NUCLEOTIDE SEQUENCE [LARGE SCALE GENOMIC DNA]</scope>
</reference>
<reference key="7">
    <citation type="journal article" date="2014" name="Proc. Natl. Acad. Sci. U.S.A.">
        <title>Whole-genome sequencing of cultivated and wild peppers provides insights into Capsicum domestication and specialization.</title>
        <authorList>
            <person name="Qin C."/>
            <person name="Yu C."/>
            <person name="Shen Y."/>
            <person name="Fang X."/>
            <person name="Chen L."/>
            <person name="Min J."/>
            <person name="Cheng J."/>
            <person name="Zhao S."/>
            <person name="Xu M."/>
            <person name="Luo Y."/>
            <person name="Yang Y."/>
            <person name="Wu Z."/>
            <person name="Mao L."/>
            <person name="Wu H."/>
            <person name="Ling-Hu C."/>
            <person name="Zhou H."/>
            <person name="Lin H."/>
            <person name="Gonzalez-Morales S."/>
            <person name="Trejo-Saavedra D.L."/>
            <person name="Tian H."/>
            <person name="Tang X."/>
            <person name="Zhao M."/>
            <person name="Huang Z."/>
            <person name="Zhou A."/>
            <person name="Yao X."/>
            <person name="Cui J."/>
            <person name="Li W."/>
            <person name="Chen Z."/>
            <person name="Feng Y."/>
            <person name="Niu Y."/>
            <person name="Bi S."/>
            <person name="Yang X."/>
            <person name="Li W."/>
            <person name="Cai H."/>
            <person name="Luo X."/>
            <person name="Montes-Hernandez S."/>
            <person name="Leyva-Gonzalez M.A."/>
            <person name="Xiong Z."/>
            <person name="He X."/>
            <person name="Bai L."/>
            <person name="Tan S."/>
            <person name="Tang X."/>
            <person name="Liu D."/>
            <person name="Liu J."/>
            <person name="Zhang S."/>
            <person name="Chen M."/>
            <person name="Zhang L."/>
            <person name="Zhang L."/>
            <person name="Zhang Y."/>
            <person name="Liao W."/>
            <person name="Zhang Y."/>
            <person name="Wang M."/>
            <person name="Lv X."/>
            <person name="Wen B."/>
            <person name="Liu H."/>
            <person name="Luan H."/>
            <person name="Zhang Y."/>
            <person name="Yang S."/>
            <person name="Wang X."/>
            <person name="Xu J."/>
            <person name="Li X."/>
            <person name="Li S."/>
            <person name="Wang J."/>
            <person name="Palloix A."/>
            <person name="Bosland P.W."/>
            <person name="Li Y."/>
            <person name="Krogh A."/>
            <person name="Rivera-Bustamante R.F."/>
            <person name="Herrera-Estrella L."/>
            <person name="Yin Y."/>
            <person name="Yu J."/>
            <person name="Hu K."/>
            <person name="Zhang Z."/>
        </authorList>
    </citation>
    <scope>NUCLEOTIDE SEQUENCE [LARGE SCALE GENOMIC DNA]</scope>
    <source>
        <strain>cv. Zunla-1</strain>
    </source>
</reference>
<reference key="8">
    <citation type="journal article" date="2017" name="Genome Biol.">
        <title>New reference genome sequences of hot pepper reveal the massive evolution of plant disease-resistance genes by retroduplication.</title>
        <authorList>
            <person name="Kim S."/>
            <person name="Park J."/>
            <person name="Yeom S.I."/>
            <person name="Kim Y.M."/>
            <person name="Seo E."/>
            <person name="Kim K.T."/>
            <person name="Kim M.S."/>
            <person name="Lee J.M."/>
            <person name="Cheong K."/>
            <person name="Shin H.S."/>
            <person name="Kim S.B."/>
            <person name="Han K."/>
            <person name="Lee J."/>
            <person name="Park M."/>
            <person name="Lee H.A."/>
            <person name="Lee H.Y."/>
            <person name="Lee Y."/>
            <person name="Oh S."/>
            <person name="Lee J.H."/>
            <person name="Choi E."/>
            <person name="Choi E."/>
            <person name="Lee S.E."/>
            <person name="Jeon J."/>
            <person name="Kim H."/>
            <person name="Choi G."/>
            <person name="Song H."/>
            <person name="Lee J."/>
            <person name="Lee S.C."/>
            <person name="Kwon J.K."/>
            <person name="Lee H.Y."/>
            <person name="Koo N."/>
            <person name="Hong Y."/>
            <person name="Kim R.W."/>
            <person name="Kang W.H."/>
            <person name="Huh J.H."/>
            <person name="Kang B.C."/>
            <person name="Yang T.J."/>
            <person name="Lee Y.H."/>
            <person name="Bennetzen J.L."/>
            <person name="Choi D."/>
        </authorList>
    </citation>
    <scope>NUCLEOTIDE SEQUENCE [LARGE SCALE GENOMIC DNA]</scope>
    <source>
        <strain>cv. CM334</strain>
    </source>
</reference>
<reference key="9">
    <citation type="journal article" date="2010" name="Plant Physiol.">
        <title>Characterization of plant carotenoid cyclases as members of the flavoprotein family functioning with no net redox change.</title>
        <authorList>
            <person name="Mialoundama A.S."/>
            <person name="Heintz D."/>
            <person name="Jadid N."/>
            <person name="Nkeng P."/>
            <person name="Rahier A."/>
            <person name="Deli J."/>
            <person name="Camara B."/>
            <person name="Bouvier F."/>
        </authorList>
    </citation>
    <scope>IDENTIFICATION BY MASS SPECTROMETRY</scope>
    <scope>FUNCTION</scope>
    <scope>CATALYTIC ACTIVITY</scope>
    <scope>COFACTOR</scope>
    <scope>BIOPHYSICOCHEMICAL PROPERTIES</scope>
    <scope>SUBUNIT</scope>
    <scope>MUTAGENESIS OF ASP-127; GLU-128; ASP-259; GLU-295; GLU-296; GLU-332 AND HIS-360</scope>
</reference>
<name>CCS_CAPAN</name>